<evidence type="ECO:0000255" key="1">
    <source>
        <dbReference type="HAMAP-Rule" id="MF_02016"/>
    </source>
</evidence>
<name>MLTF_ERWT9</name>
<reference key="1">
    <citation type="journal article" date="2008" name="Environ. Microbiol.">
        <title>The genome of Erwinia tasmaniensis strain Et1/99, a non-pathogenic bacterium in the genus Erwinia.</title>
        <authorList>
            <person name="Kube M."/>
            <person name="Migdoll A.M."/>
            <person name="Mueller I."/>
            <person name="Kuhl H."/>
            <person name="Beck A."/>
            <person name="Reinhardt R."/>
            <person name="Geider K."/>
        </authorList>
    </citation>
    <scope>NUCLEOTIDE SEQUENCE [LARGE SCALE GENOMIC DNA]</scope>
    <source>
        <strain>DSM 17950 / CFBP 7177 / CIP 109463 / NCPPB 4357 / Et1/99</strain>
    </source>
</reference>
<sequence>MKRLRFNYLLIGLITVLLALALWPSIPWYGGSTDRIAQIKSRGELRISTINSPLTYYTVNQSPAGMDYELAKRFADYLGVRLVVTVRPNLADLFDDLADDKADILAAGLIYNRERLKRFRAGPSYYSVSQQLVYRIGTSRPKNLGDLKGRLTVASGSAYLSSLREIKDRQYPDLDWAVSTDRTPDGLLQAVADGKIDYTIADSVSIGLMQRIHPQLTVAFDITEEEAVTWYTQQEANDSLNAAMLDFFSKMSEEGVIARLDEKYLGHVGTFDYVDTRTFLRSIDETLPDIRRLFEKYAKKIDWRLLAAISYQESHWDPLATSPTGVRGMMMLTRSTADSLNVSDRTDAEQSIRGGSEYMTHMMEKVPSGVPEDERIWFALAAYNMGYAHMLDARKLTEKQKGDPNSWADVKVRLPMLSQKRYYSQTTYGYARGHEAYAYVENIRKYQLSLVGYLQDRERKLAQKMAAEAELRQAYPAVEPDAALNPVSALPLP</sequence>
<protein>
    <recommendedName>
        <fullName evidence="1">Membrane-bound lytic murein transglycosylase F</fullName>
        <ecNumber evidence="1">4.2.2.n1</ecNumber>
    </recommendedName>
    <alternativeName>
        <fullName evidence="1">Murein lyase F</fullName>
    </alternativeName>
</protein>
<gene>
    <name evidence="1" type="primary">mltF</name>
    <name type="ordered locus">ETA_10060</name>
</gene>
<comment type="function">
    <text evidence="1">Murein-degrading enzyme that degrades murein glycan strands and insoluble, high-molecular weight murein sacculi, with the concomitant formation of a 1,6-anhydromuramoyl product. Lytic transglycosylases (LTs) play an integral role in the metabolism of the peptidoglycan (PG) sacculus. Their lytic action creates space within the PG sacculus to allow for its expansion as well as for the insertion of various structures such as secretion systems and flagella.</text>
</comment>
<comment type="catalytic activity">
    <reaction evidence="1">
        <text>Exolytic cleavage of the (1-&gt;4)-beta-glycosidic linkage between N-acetylmuramic acid (MurNAc) and N-acetylglucosamine (GlcNAc) residues in peptidoglycan, from either the reducing or the non-reducing ends of the peptidoglycan chains, with concomitant formation of a 1,6-anhydrobond in the MurNAc residue.</text>
        <dbReference type="EC" id="4.2.2.n1"/>
    </reaction>
</comment>
<comment type="subcellular location">
    <subcellularLocation>
        <location>Cell outer membrane</location>
        <topology>Peripheral membrane protein</topology>
    </subcellularLocation>
    <text evidence="1">Attached to the inner leaflet of the outer membrane.</text>
</comment>
<comment type="domain">
    <text evidence="1">The N-terminal domain does not have lytic activity and probably modulates enzymatic activity. The C-terminal domain is the catalytic active domain.</text>
</comment>
<comment type="similarity">
    <text evidence="1">In the N-terminal section; belongs to the bacterial solute-binding protein 3 family.</text>
</comment>
<comment type="similarity">
    <text evidence="1">In the C-terminal section; belongs to the transglycosylase Slt family.</text>
</comment>
<dbReference type="EC" id="4.2.2.n1" evidence="1"/>
<dbReference type="EMBL" id="CU468135">
    <property type="protein sequence ID" value="CAO96052.1"/>
    <property type="molecule type" value="Genomic_DNA"/>
</dbReference>
<dbReference type="RefSeq" id="WP_012440753.1">
    <property type="nucleotide sequence ID" value="NC_010694.1"/>
</dbReference>
<dbReference type="SMR" id="B2VEB4"/>
<dbReference type="STRING" id="465817.ETA_10060"/>
<dbReference type="CAZy" id="GH23">
    <property type="family name" value="Glycoside Hydrolase Family 23"/>
</dbReference>
<dbReference type="KEGG" id="eta:ETA_10060"/>
<dbReference type="eggNOG" id="COG4623">
    <property type="taxonomic scope" value="Bacteria"/>
</dbReference>
<dbReference type="HOGENOM" id="CLU_027494_0_1_6"/>
<dbReference type="OrthoDB" id="9815002at2"/>
<dbReference type="Proteomes" id="UP000001726">
    <property type="component" value="Chromosome"/>
</dbReference>
<dbReference type="GO" id="GO:0009279">
    <property type="term" value="C:cell outer membrane"/>
    <property type="evidence" value="ECO:0007669"/>
    <property type="project" value="UniProtKB-SubCell"/>
</dbReference>
<dbReference type="GO" id="GO:0008933">
    <property type="term" value="F:peptidoglycan lytic transglycosylase activity"/>
    <property type="evidence" value="ECO:0007669"/>
    <property type="project" value="UniProtKB-UniRule"/>
</dbReference>
<dbReference type="GO" id="GO:0016998">
    <property type="term" value="P:cell wall macromolecule catabolic process"/>
    <property type="evidence" value="ECO:0007669"/>
    <property type="project" value="UniProtKB-UniRule"/>
</dbReference>
<dbReference type="GO" id="GO:0071555">
    <property type="term" value="P:cell wall organization"/>
    <property type="evidence" value="ECO:0007669"/>
    <property type="project" value="UniProtKB-KW"/>
</dbReference>
<dbReference type="GO" id="GO:0009253">
    <property type="term" value="P:peptidoglycan catabolic process"/>
    <property type="evidence" value="ECO:0007669"/>
    <property type="project" value="TreeGrafter"/>
</dbReference>
<dbReference type="CDD" id="cd13403">
    <property type="entry name" value="MLTF-like"/>
    <property type="match status" value="1"/>
</dbReference>
<dbReference type="CDD" id="cd01009">
    <property type="entry name" value="PBP2_YfhD_N"/>
    <property type="match status" value="1"/>
</dbReference>
<dbReference type="FunFam" id="1.10.530.10:FF:000003">
    <property type="entry name" value="Membrane-bound lytic murein transglycosylase F"/>
    <property type="match status" value="1"/>
</dbReference>
<dbReference type="Gene3D" id="1.10.530.10">
    <property type="match status" value="1"/>
</dbReference>
<dbReference type="Gene3D" id="3.40.190.10">
    <property type="entry name" value="Periplasmic binding protein-like II"/>
    <property type="match status" value="2"/>
</dbReference>
<dbReference type="HAMAP" id="MF_02016">
    <property type="entry name" value="MltF"/>
    <property type="match status" value="1"/>
</dbReference>
<dbReference type="InterPro" id="IPR023346">
    <property type="entry name" value="Lysozyme-like_dom_sf"/>
</dbReference>
<dbReference type="InterPro" id="IPR023703">
    <property type="entry name" value="MltF"/>
</dbReference>
<dbReference type="InterPro" id="IPR001638">
    <property type="entry name" value="Solute-binding_3/MltF_N"/>
</dbReference>
<dbReference type="InterPro" id="IPR000189">
    <property type="entry name" value="Transglyc_AS"/>
</dbReference>
<dbReference type="InterPro" id="IPR008258">
    <property type="entry name" value="Transglycosylase_SLT_dom_1"/>
</dbReference>
<dbReference type="NCBIfam" id="NF008112">
    <property type="entry name" value="PRK10859.1"/>
    <property type="match status" value="1"/>
</dbReference>
<dbReference type="PANTHER" id="PTHR35936">
    <property type="entry name" value="MEMBRANE-BOUND LYTIC MUREIN TRANSGLYCOSYLASE F"/>
    <property type="match status" value="1"/>
</dbReference>
<dbReference type="PANTHER" id="PTHR35936:SF32">
    <property type="entry name" value="MEMBRANE-BOUND LYTIC MUREIN TRANSGLYCOSYLASE F"/>
    <property type="match status" value="1"/>
</dbReference>
<dbReference type="Pfam" id="PF00497">
    <property type="entry name" value="SBP_bac_3"/>
    <property type="match status" value="1"/>
</dbReference>
<dbReference type="Pfam" id="PF01464">
    <property type="entry name" value="SLT"/>
    <property type="match status" value="1"/>
</dbReference>
<dbReference type="SMART" id="SM00062">
    <property type="entry name" value="PBPb"/>
    <property type="match status" value="1"/>
</dbReference>
<dbReference type="SUPFAM" id="SSF53955">
    <property type="entry name" value="Lysozyme-like"/>
    <property type="match status" value="1"/>
</dbReference>
<dbReference type="SUPFAM" id="SSF53850">
    <property type="entry name" value="Periplasmic binding protein-like II"/>
    <property type="match status" value="1"/>
</dbReference>
<dbReference type="PROSITE" id="PS00922">
    <property type="entry name" value="TRANSGLYCOSYLASE"/>
    <property type="match status" value="1"/>
</dbReference>
<keyword id="KW-0998">Cell outer membrane</keyword>
<keyword id="KW-0961">Cell wall biogenesis/degradation</keyword>
<keyword id="KW-0456">Lyase</keyword>
<keyword id="KW-0472">Membrane</keyword>
<keyword id="KW-1185">Reference proteome</keyword>
<keyword id="KW-0732">Signal</keyword>
<proteinExistence type="inferred from homology"/>
<accession>B2VEB4</accession>
<feature type="signal peptide" evidence="1">
    <location>
        <begin position="1"/>
        <end position="21"/>
    </location>
</feature>
<feature type="chain" id="PRO_0000353938" description="Membrane-bound lytic murein transglycosylase F">
    <location>
        <begin position="22"/>
        <end position="493"/>
    </location>
</feature>
<feature type="region of interest" description="Non-LT domain" evidence="1">
    <location>
        <begin position="22"/>
        <end position="268"/>
    </location>
</feature>
<feature type="region of interest" description="LT domain" evidence="1">
    <location>
        <begin position="269"/>
        <end position="493"/>
    </location>
</feature>
<feature type="active site" evidence="1">
    <location>
        <position position="313"/>
    </location>
</feature>
<organism>
    <name type="scientific">Erwinia tasmaniensis (strain DSM 17950 / CFBP 7177 / CIP 109463 / NCPPB 4357 / Et1/99)</name>
    <dbReference type="NCBI Taxonomy" id="465817"/>
    <lineage>
        <taxon>Bacteria</taxon>
        <taxon>Pseudomonadati</taxon>
        <taxon>Pseudomonadota</taxon>
        <taxon>Gammaproteobacteria</taxon>
        <taxon>Enterobacterales</taxon>
        <taxon>Erwiniaceae</taxon>
        <taxon>Erwinia</taxon>
    </lineage>
</organism>